<accession>P17877</accession>
<evidence type="ECO:0000256" key="1">
    <source>
        <dbReference type="SAM" id="MobiDB-lite"/>
    </source>
</evidence>
<reference key="1">
    <citation type="journal article" date="1989" name="J. Bacteriol.">
        <title>Purification and properties of an endo-1,4-beta-glucanase from Clostridium josui.</title>
        <authorList>
            <person name="Fujino T."/>
            <person name="Sukhumavasi J."/>
            <person name="Sasaki T."/>
            <person name="Ohmiya K."/>
            <person name="Shimizu S."/>
        </authorList>
    </citation>
    <scope>PROTEIN SEQUENCE</scope>
</reference>
<protein>
    <recommendedName>
        <fullName>Endoglucanase 1</fullName>
        <ecNumber>3.2.1.4</ecNumber>
    </recommendedName>
    <alternativeName>
        <fullName>Cellulase 1</fullName>
    </alternativeName>
    <alternativeName>
        <fullName>Endo-1,4-beta-glucanase 1</fullName>
    </alternativeName>
</protein>
<proteinExistence type="evidence at protein level"/>
<comment type="function">
    <text>This enzyme hydrolyzes cellotetraose, cellopentaose, and cellohexaose to cellobiose and cellotriose but does not hydrolyze cellobiose or cellotriose.</text>
</comment>
<comment type="catalytic activity">
    <reaction>
        <text>Endohydrolysis of (1-&gt;4)-beta-D-glucosidic linkages in cellulose, lichenin and cereal beta-D-glucans.</text>
        <dbReference type="EC" id="3.2.1.4"/>
    </reaction>
</comment>
<comment type="biophysicochemical properties">
    <phDependence>
        <text>Optimum pH is 6.8 with carboxymethyl cellulose (CmC) as substrate.</text>
    </phDependence>
    <temperatureDependence>
        <text>Optimum temperature is 60 degrees Celsius with carboxymethyl cellulose (CmC) as substrate.</text>
    </temperatureDependence>
</comment>
<feature type="chain" id="PRO_0000184077" description="Endoglucanase 1">
    <location>
        <begin position="1"/>
        <end position="25" status="greater than"/>
    </location>
</feature>
<feature type="region of interest" description="Disordered" evidence="1">
    <location>
        <begin position="1"/>
        <end position="25"/>
    </location>
</feature>
<feature type="compositionally biased region" description="Polar residues" evidence="1">
    <location>
        <begin position="10"/>
        <end position="25"/>
    </location>
</feature>
<feature type="non-terminal residue">
    <location>
        <position position="25"/>
    </location>
</feature>
<organism>
    <name type="scientific">Ruminiclostridium josui</name>
    <name type="common">Clostridium josui</name>
    <dbReference type="NCBI Taxonomy" id="1499"/>
    <lineage>
        <taxon>Bacteria</taxon>
        <taxon>Bacillati</taxon>
        <taxon>Bacillota</taxon>
        <taxon>Clostridia</taxon>
        <taxon>Eubacteriales</taxon>
        <taxon>Oscillospiraceae</taxon>
        <taxon>Ruminiclostridium</taxon>
    </lineage>
</organism>
<dbReference type="EC" id="3.2.1.4"/>
<dbReference type="PIR" id="A45920">
    <property type="entry name" value="A45920"/>
</dbReference>
<dbReference type="GO" id="GO:0008810">
    <property type="term" value="F:cellulase activity"/>
    <property type="evidence" value="ECO:0007669"/>
    <property type="project" value="UniProtKB-EC"/>
</dbReference>
<dbReference type="GO" id="GO:0030245">
    <property type="term" value="P:cellulose catabolic process"/>
    <property type="evidence" value="ECO:0007669"/>
    <property type="project" value="UniProtKB-KW"/>
</dbReference>
<sequence length="25" mass="2808">YDASLKPNLQIPQKNIPNNDAVNIK</sequence>
<keyword id="KW-0119">Carbohydrate metabolism</keyword>
<keyword id="KW-0136">Cellulose degradation</keyword>
<keyword id="KW-0903">Direct protein sequencing</keyword>
<keyword id="KW-0326">Glycosidase</keyword>
<keyword id="KW-0378">Hydrolase</keyword>
<keyword id="KW-0624">Polysaccharide degradation</keyword>
<name>GUN1_RUMJO</name>